<sequence length="218" mass="23131">MSENEIKGILGTKLGMTQIFDEENRVIPVTVVEAGPCVVSQIRTVETDGYNAIQIAYGEIDPRKVNQPLTGHFKKAGVTPRRHVTEIRMDDVSGYEVGQDVTVEIFNDVKFVDVTGTSKGKGYAGAMKRHGFAGQGAGHGNQAAHRRVGGIGAAATPGRIFKGKRMAGRMGNDRVTTQNLKVQKIDADANLILIKGAIPGNRGGIVTVKTAVKGGAHA</sequence>
<evidence type="ECO:0000255" key="1">
    <source>
        <dbReference type="HAMAP-Rule" id="MF_01325"/>
    </source>
</evidence>
<evidence type="ECO:0000305" key="2"/>
<name>RL3_COREF</name>
<proteinExistence type="inferred from homology"/>
<comment type="function">
    <text evidence="1">One of the primary rRNA binding proteins, it binds directly near the 3'-end of the 23S rRNA, where it nucleates assembly of the 50S subunit.</text>
</comment>
<comment type="subunit">
    <text evidence="1">Part of the 50S ribosomal subunit. Forms a cluster with proteins L14 and L19.</text>
</comment>
<comment type="similarity">
    <text evidence="1">Belongs to the universal ribosomal protein uL3 family.</text>
</comment>
<feature type="chain" id="PRO_0000077094" description="Large ribosomal subunit protein uL3">
    <location>
        <begin position="1"/>
        <end position="218"/>
    </location>
</feature>
<accession>Q8FS80</accession>
<dbReference type="EMBL" id="BA000035">
    <property type="protein sequence ID" value="BAC17332.1"/>
    <property type="molecule type" value="Genomic_DNA"/>
</dbReference>
<dbReference type="RefSeq" id="WP_006769804.1">
    <property type="nucleotide sequence ID" value="NC_004369.1"/>
</dbReference>
<dbReference type="SMR" id="Q8FS80"/>
<dbReference type="STRING" id="196164.gene:10740924"/>
<dbReference type="KEGG" id="cef:CE0522"/>
<dbReference type="eggNOG" id="COG0087">
    <property type="taxonomic scope" value="Bacteria"/>
</dbReference>
<dbReference type="HOGENOM" id="CLU_044142_4_1_11"/>
<dbReference type="OrthoDB" id="9806135at2"/>
<dbReference type="Proteomes" id="UP000001409">
    <property type="component" value="Chromosome"/>
</dbReference>
<dbReference type="GO" id="GO:0022625">
    <property type="term" value="C:cytosolic large ribosomal subunit"/>
    <property type="evidence" value="ECO:0007669"/>
    <property type="project" value="TreeGrafter"/>
</dbReference>
<dbReference type="GO" id="GO:0019843">
    <property type="term" value="F:rRNA binding"/>
    <property type="evidence" value="ECO:0007669"/>
    <property type="project" value="UniProtKB-UniRule"/>
</dbReference>
<dbReference type="GO" id="GO:0003735">
    <property type="term" value="F:structural constituent of ribosome"/>
    <property type="evidence" value="ECO:0007669"/>
    <property type="project" value="InterPro"/>
</dbReference>
<dbReference type="GO" id="GO:0006412">
    <property type="term" value="P:translation"/>
    <property type="evidence" value="ECO:0007669"/>
    <property type="project" value="UniProtKB-UniRule"/>
</dbReference>
<dbReference type="FunFam" id="2.40.30.10:FF:000004">
    <property type="entry name" value="50S ribosomal protein L3"/>
    <property type="match status" value="1"/>
</dbReference>
<dbReference type="FunFam" id="3.30.160.810:FF:000001">
    <property type="entry name" value="50S ribosomal protein L3"/>
    <property type="match status" value="1"/>
</dbReference>
<dbReference type="Gene3D" id="3.30.160.810">
    <property type="match status" value="1"/>
</dbReference>
<dbReference type="Gene3D" id="2.40.30.10">
    <property type="entry name" value="Translation factors"/>
    <property type="match status" value="1"/>
</dbReference>
<dbReference type="HAMAP" id="MF_01325_B">
    <property type="entry name" value="Ribosomal_uL3_B"/>
    <property type="match status" value="1"/>
</dbReference>
<dbReference type="InterPro" id="IPR000597">
    <property type="entry name" value="Ribosomal_uL3"/>
</dbReference>
<dbReference type="InterPro" id="IPR019927">
    <property type="entry name" value="Ribosomal_uL3_bac/org-type"/>
</dbReference>
<dbReference type="InterPro" id="IPR019926">
    <property type="entry name" value="Ribosomal_uL3_CS"/>
</dbReference>
<dbReference type="InterPro" id="IPR009000">
    <property type="entry name" value="Transl_B-barrel_sf"/>
</dbReference>
<dbReference type="NCBIfam" id="TIGR03625">
    <property type="entry name" value="L3_bact"/>
    <property type="match status" value="1"/>
</dbReference>
<dbReference type="PANTHER" id="PTHR11229">
    <property type="entry name" value="50S RIBOSOMAL PROTEIN L3"/>
    <property type="match status" value="1"/>
</dbReference>
<dbReference type="PANTHER" id="PTHR11229:SF16">
    <property type="entry name" value="LARGE RIBOSOMAL SUBUNIT PROTEIN UL3C"/>
    <property type="match status" value="1"/>
</dbReference>
<dbReference type="Pfam" id="PF00297">
    <property type="entry name" value="Ribosomal_L3"/>
    <property type="match status" value="1"/>
</dbReference>
<dbReference type="SUPFAM" id="SSF50447">
    <property type="entry name" value="Translation proteins"/>
    <property type="match status" value="1"/>
</dbReference>
<dbReference type="PROSITE" id="PS00474">
    <property type="entry name" value="RIBOSOMAL_L3"/>
    <property type="match status" value="1"/>
</dbReference>
<organism>
    <name type="scientific">Corynebacterium efficiens (strain DSM 44549 / YS-314 / AJ 12310 / JCM 11189 / NBRC 100395)</name>
    <dbReference type="NCBI Taxonomy" id="196164"/>
    <lineage>
        <taxon>Bacteria</taxon>
        <taxon>Bacillati</taxon>
        <taxon>Actinomycetota</taxon>
        <taxon>Actinomycetes</taxon>
        <taxon>Mycobacteriales</taxon>
        <taxon>Corynebacteriaceae</taxon>
        <taxon>Corynebacterium</taxon>
    </lineage>
</organism>
<keyword id="KW-1185">Reference proteome</keyword>
<keyword id="KW-0687">Ribonucleoprotein</keyword>
<keyword id="KW-0689">Ribosomal protein</keyword>
<keyword id="KW-0694">RNA-binding</keyword>
<keyword id="KW-0699">rRNA-binding</keyword>
<gene>
    <name evidence="1" type="primary">rplC</name>
    <name type="ordered locus">CE0522</name>
</gene>
<reference key="1">
    <citation type="journal article" date="2003" name="Genome Res.">
        <title>Comparative complete genome sequence analysis of the amino acid replacements responsible for the thermostability of Corynebacterium efficiens.</title>
        <authorList>
            <person name="Nishio Y."/>
            <person name="Nakamura Y."/>
            <person name="Kawarabayasi Y."/>
            <person name="Usuda Y."/>
            <person name="Kimura E."/>
            <person name="Sugimoto S."/>
            <person name="Matsui K."/>
            <person name="Yamagishi A."/>
            <person name="Kikuchi H."/>
            <person name="Ikeo K."/>
            <person name="Gojobori T."/>
        </authorList>
    </citation>
    <scope>NUCLEOTIDE SEQUENCE [LARGE SCALE GENOMIC DNA]</scope>
    <source>
        <strain>DSM 44549 / YS-314 / AJ 12310 / JCM 11189 / NBRC 100395</strain>
    </source>
</reference>
<protein>
    <recommendedName>
        <fullName evidence="1">Large ribosomal subunit protein uL3</fullName>
    </recommendedName>
    <alternativeName>
        <fullName evidence="2">50S ribosomal protein L3</fullName>
    </alternativeName>
</protein>